<organism>
    <name type="scientific">Prochlorococcus marinus (strain MIT 9313)</name>
    <dbReference type="NCBI Taxonomy" id="74547"/>
    <lineage>
        <taxon>Bacteria</taxon>
        <taxon>Bacillati</taxon>
        <taxon>Cyanobacteriota</taxon>
        <taxon>Cyanophyceae</taxon>
        <taxon>Synechococcales</taxon>
        <taxon>Prochlorococcaceae</taxon>
        <taxon>Prochlorococcus</taxon>
    </lineage>
</organism>
<sequence length="304" mass="33250">MSGLQVLLVAGTHGNEINGPWLLDQWSQTPELINTHGVGVVPVIGNPEALALGRRYLDCDLNRSFRLDLLRSPSILDREVVRAKQLLSFFGPEGSTPCQIVIDLHSTTSAMGSTLVVYGRRSVDLALAALIQARLGLPIYLHDGDDDQQGFLVERWPCGLVIEIGPVPQGLLKARIIEQTRLAVQACLEALSSVASGSPTYPDEFVVHSHLGSLDLPRDALGQPAACVHPSLQGRDWQPLQMGAPLFLWPDGEVFRFEGRDSPIPVFINEAAYVEKHIAMSLTCREVCPLPEQWQGALQQLVDC</sequence>
<comment type="catalytic activity">
    <reaction>
        <text>an N-acyl-L-aspartate + H2O = a carboxylate + L-aspartate</text>
        <dbReference type="Rhea" id="RHEA:10872"/>
        <dbReference type="ChEBI" id="CHEBI:15377"/>
        <dbReference type="ChEBI" id="CHEBI:29067"/>
        <dbReference type="ChEBI" id="CHEBI:29991"/>
        <dbReference type="ChEBI" id="CHEBI:58497"/>
        <dbReference type="EC" id="3.5.1.15"/>
    </reaction>
</comment>
<comment type="cofactor">
    <cofactor evidence="1">
        <name>Zn(2+)</name>
        <dbReference type="ChEBI" id="CHEBI:29105"/>
    </cofactor>
    <text evidence="1">Binds 1 zinc ion per subunit.</text>
</comment>
<comment type="similarity">
    <text evidence="2">Belongs to the AspA/AstE family. Aspartoacylase subfamily.</text>
</comment>
<gene>
    <name type="ordered locus">PMT_1537</name>
</gene>
<proteinExistence type="inferred from homology"/>
<name>ASPA_PROMM</name>
<keyword id="KW-0378">Hydrolase</keyword>
<keyword id="KW-0479">Metal-binding</keyword>
<keyword id="KW-1185">Reference proteome</keyword>
<keyword id="KW-0862">Zinc</keyword>
<accession>Q7V5L6</accession>
<feature type="chain" id="PRO_0000216879" description="Probable aspartoacylase">
    <location>
        <begin position="1"/>
        <end position="304"/>
    </location>
</feature>
<feature type="binding site" evidence="1">
    <location>
        <position position="13"/>
    </location>
    <ligand>
        <name>Zn(2+)</name>
        <dbReference type="ChEBI" id="CHEBI:29105"/>
    </ligand>
</feature>
<feature type="binding site" evidence="1">
    <location>
        <position position="16"/>
    </location>
    <ligand>
        <name>Zn(2+)</name>
        <dbReference type="ChEBI" id="CHEBI:29105"/>
    </ligand>
</feature>
<feature type="binding site" evidence="1">
    <location>
        <position position="55"/>
    </location>
    <ligand>
        <name>substrate</name>
    </ligand>
</feature>
<feature type="binding site" evidence="1">
    <location>
        <begin position="62"/>
        <end position="63"/>
    </location>
    <ligand>
        <name>substrate</name>
    </ligand>
</feature>
<feature type="binding site" evidence="1">
    <location>
        <position position="105"/>
    </location>
    <ligand>
        <name>Zn(2+)</name>
        <dbReference type="ChEBI" id="CHEBI:29105"/>
    </ligand>
</feature>
<feature type="binding site" evidence="1">
    <location>
        <position position="163"/>
    </location>
    <ligand>
        <name>substrate</name>
    </ligand>
</feature>
<feature type="binding site" evidence="1">
    <location>
        <position position="273"/>
    </location>
    <ligand>
        <name>substrate</name>
    </ligand>
</feature>
<dbReference type="EC" id="3.5.1.15"/>
<dbReference type="EMBL" id="BX548175">
    <property type="protein sequence ID" value="CAE21712.1"/>
    <property type="molecule type" value="Genomic_DNA"/>
</dbReference>
<dbReference type="RefSeq" id="WP_011130904.1">
    <property type="nucleotide sequence ID" value="NC_005071.1"/>
</dbReference>
<dbReference type="SMR" id="Q7V5L6"/>
<dbReference type="KEGG" id="pmt:PMT_1537"/>
<dbReference type="eggNOG" id="COG2988">
    <property type="taxonomic scope" value="Bacteria"/>
</dbReference>
<dbReference type="HOGENOM" id="CLU_083292_0_0_3"/>
<dbReference type="OrthoDB" id="531770at2"/>
<dbReference type="Proteomes" id="UP000001423">
    <property type="component" value="Chromosome"/>
</dbReference>
<dbReference type="GO" id="GO:0005829">
    <property type="term" value="C:cytosol"/>
    <property type="evidence" value="ECO:0007669"/>
    <property type="project" value="TreeGrafter"/>
</dbReference>
<dbReference type="GO" id="GO:0019807">
    <property type="term" value="F:aspartoacylase activity"/>
    <property type="evidence" value="ECO:0007669"/>
    <property type="project" value="UniProtKB-UniRule"/>
</dbReference>
<dbReference type="GO" id="GO:0016788">
    <property type="term" value="F:hydrolase activity, acting on ester bonds"/>
    <property type="evidence" value="ECO:0007669"/>
    <property type="project" value="InterPro"/>
</dbReference>
<dbReference type="GO" id="GO:0008270">
    <property type="term" value="F:zinc ion binding"/>
    <property type="evidence" value="ECO:0007669"/>
    <property type="project" value="UniProtKB-UniRule"/>
</dbReference>
<dbReference type="CDD" id="cd06909">
    <property type="entry name" value="M14_ASPA"/>
    <property type="match status" value="1"/>
</dbReference>
<dbReference type="Gene3D" id="2.20.25.160">
    <property type="match status" value="1"/>
</dbReference>
<dbReference type="Gene3D" id="3.40.630.10">
    <property type="entry name" value="Zn peptidases"/>
    <property type="match status" value="1"/>
</dbReference>
<dbReference type="HAMAP" id="MF_00704">
    <property type="entry name" value="Aspartoacylase"/>
    <property type="match status" value="1"/>
</dbReference>
<dbReference type="InterPro" id="IPR050178">
    <property type="entry name" value="AspA/AstE_fam"/>
</dbReference>
<dbReference type="InterPro" id="IPR016708">
    <property type="entry name" value="Aspartoacylase"/>
</dbReference>
<dbReference type="InterPro" id="IPR055438">
    <property type="entry name" value="AstE_AspA_cat"/>
</dbReference>
<dbReference type="InterPro" id="IPR007036">
    <property type="entry name" value="Aste_AspA_hybrid_dom"/>
</dbReference>
<dbReference type="NCBIfam" id="NF002601">
    <property type="entry name" value="PRK02259.1"/>
    <property type="match status" value="1"/>
</dbReference>
<dbReference type="PANTHER" id="PTHR15162">
    <property type="entry name" value="ASPARTOACYLASE"/>
    <property type="match status" value="1"/>
</dbReference>
<dbReference type="PANTHER" id="PTHR15162:SF7">
    <property type="entry name" value="SUCCINYLGLUTAMATE DESUCCINYLASE"/>
    <property type="match status" value="1"/>
</dbReference>
<dbReference type="Pfam" id="PF24827">
    <property type="entry name" value="AstE_AspA_cat"/>
    <property type="match status" value="1"/>
</dbReference>
<dbReference type="Pfam" id="PF04952">
    <property type="entry name" value="AstE_AspA_hybrid"/>
    <property type="match status" value="1"/>
</dbReference>
<dbReference type="PIRSF" id="PIRSF018001">
    <property type="entry name" value="Aspartoacylase"/>
    <property type="match status" value="1"/>
</dbReference>
<dbReference type="SUPFAM" id="SSF53187">
    <property type="entry name" value="Zn-dependent exopeptidases"/>
    <property type="match status" value="1"/>
</dbReference>
<protein>
    <recommendedName>
        <fullName>Probable aspartoacylase</fullName>
        <ecNumber>3.5.1.15</ecNumber>
    </recommendedName>
</protein>
<reference key="1">
    <citation type="journal article" date="2003" name="Nature">
        <title>Genome divergence in two Prochlorococcus ecotypes reflects oceanic niche differentiation.</title>
        <authorList>
            <person name="Rocap G."/>
            <person name="Larimer F.W."/>
            <person name="Lamerdin J.E."/>
            <person name="Malfatti S."/>
            <person name="Chain P."/>
            <person name="Ahlgren N.A."/>
            <person name="Arellano A."/>
            <person name="Coleman M."/>
            <person name="Hauser L."/>
            <person name="Hess W.R."/>
            <person name="Johnson Z.I."/>
            <person name="Land M.L."/>
            <person name="Lindell D."/>
            <person name="Post A.F."/>
            <person name="Regala W."/>
            <person name="Shah M."/>
            <person name="Shaw S.L."/>
            <person name="Steglich C."/>
            <person name="Sullivan M.B."/>
            <person name="Ting C.S."/>
            <person name="Tolonen A."/>
            <person name="Webb E.A."/>
            <person name="Zinser E.R."/>
            <person name="Chisholm S.W."/>
        </authorList>
    </citation>
    <scope>NUCLEOTIDE SEQUENCE [LARGE SCALE GENOMIC DNA]</scope>
    <source>
        <strain>MIT 9313</strain>
    </source>
</reference>
<evidence type="ECO:0000250" key="1"/>
<evidence type="ECO:0000305" key="2"/>